<dbReference type="EC" id="7.1.1.-" evidence="1"/>
<dbReference type="EMBL" id="CP000820">
    <property type="protein sequence ID" value="ABW15425.1"/>
    <property type="molecule type" value="Genomic_DNA"/>
</dbReference>
<dbReference type="RefSeq" id="WP_020463506.1">
    <property type="nucleotide sequence ID" value="NC_009921.1"/>
</dbReference>
<dbReference type="SMR" id="A8LC88"/>
<dbReference type="STRING" id="298653.Franean1_6081"/>
<dbReference type="KEGG" id="fre:Franean1_6081"/>
<dbReference type="eggNOG" id="COG1007">
    <property type="taxonomic scope" value="Bacteria"/>
</dbReference>
<dbReference type="HOGENOM" id="CLU_007100_1_1_11"/>
<dbReference type="GO" id="GO:0005886">
    <property type="term" value="C:plasma membrane"/>
    <property type="evidence" value="ECO:0007669"/>
    <property type="project" value="UniProtKB-SubCell"/>
</dbReference>
<dbReference type="GO" id="GO:0008137">
    <property type="term" value="F:NADH dehydrogenase (ubiquinone) activity"/>
    <property type="evidence" value="ECO:0007669"/>
    <property type="project" value="InterPro"/>
</dbReference>
<dbReference type="GO" id="GO:0050136">
    <property type="term" value="F:NADH:ubiquinone reductase (non-electrogenic) activity"/>
    <property type="evidence" value="ECO:0007669"/>
    <property type="project" value="UniProtKB-UniRule"/>
</dbReference>
<dbReference type="GO" id="GO:0048038">
    <property type="term" value="F:quinone binding"/>
    <property type="evidence" value="ECO:0007669"/>
    <property type="project" value="UniProtKB-KW"/>
</dbReference>
<dbReference type="GO" id="GO:0042773">
    <property type="term" value="P:ATP synthesis coupled electron transport"/>
    <property type="evidence" value="ECO:0007669"/>
    <property type="project" value="InterPro"/>
</dbReference>
<dbReference type="HAMAP" id="MF_00445">
    <property type="entry name" value="NDH1_NuoN_1"/>
    <property type="match status" value="1"/>
</dbReference>
<dbReference type="InterPro" id="IPR010096">
    <property type="entry name" value="NADH-Q_OxRdtase_suN/2"/>
</dbReference>
<dbReference type="InterPro" id="IPR001750">
    <property type="entry name" value="ND/Mrp_TM"/>
</dbReference>
<dbReference type="NCBIfam" id="TIGR01770">
    <property type="entry name" value="NDH_I_N"/>
    <property type="match status" value="1"/>
</dbReference>
<dbReference type="NCBIfam" id="NF004441">
    <property type="entry name" value="PRK05777.1-4"/>
    <property type="match status" value="1"/>
</dbReference>
<dbReference type="PANTHER" id="PTHR22773">
    <property type="entry name" value="NADH DEHYDROGENASE"/>
    <property type="match status" value="1"/>
</dbReference>
<dbReference type="Pfam" id="PF00361">
    <property type="entry name" value="Proton_antipo_M"/>
    <property type="match status" value="1"/>
</dbReference>
<reference key="1">
    <citation type="journal article" date="2007" name="Genome Res.">
        <title>Genome characteristics of facultatively symbiotic Frankia sp. strains reflect host range and host plant biogeography.</title>
        <authorList>
            <person name="Normand P."/>
            <person name="Lapierre P."/>
            <person name="Tisa L.S."/>
            <person name="Gogarten J.P."/>
            <person name="Alloisio N."/>
            <person name="Bagnarol E."/>
            <person name="Bassi C.A."/>
            <person name="Berry A.M."/>
            <person name="Bickhart D.M."/>
            <person name="Choisne N."/>
            <person name="Couloux A."/>
            <person name="Cournoyer B."/>
            <person name="Cruveiller S."/>
            <person name="Daubin V."/>
            <person name="Demange N."/>
            <person name="Francino M.P."/>
            <person name="Goltsman E."/>
            <person name="Huang Y."/>
            <person name="Kopp O.R."/>
            <person name="Labarre L."/>
            <person name="Lapidus A."/>
            <person name="Lavire C."/>
            <person name="Marechal J."/>
            <person name="Martinez M."/>
            <person name="Mastronunzio J.E."/>
            <person name="Mullin B.C."/>
            <person name="Niemann J."/>
            <person name="Pujic P."/>
            <person name="Rawnsley T."/>
            <person name="Rouy Z."/>
            <person name="Schenowitz C."/>
            <person name="Sellstedt A."/>
            <person name="Tavares F."/>
            <person name="Tomkins J.P."/>
            <person name="Vallenet D."/>
            <person name="Valverde C."/>
            <person name="Wall L.G."/>
            <person name="Wang Y."/>
            <person name="Medigue C."/>
            <person name="Benson D.R."/>
        </authorList>
    </citation>
    <scope>NUCLEOTIDE SEQUENCE [LARGE SCALE GENOMIC DNA]</scope>
    <source>
        <strain>EAN1pec</strain>
    </source>
</reference>
<evidence type="ECO:0000255" key="1">
    <source>
        <dbReference type="HAMAP-Rule" id="MF_00445"/>
    </source>
</evidence>
<protein>
    <recommendedName>
        <fullName evidence="1">NADH-quinone oxidoreductase subunit N</fullName>
        <ecNumber evidence="1">7.1.1.-</ecNumber>
    </recommendedName>
    <alternativeName>
        <fullName evidence="1">NADH dehydrogenase I subunit N</fullName>
    </alternativeName>
    <alternativeName>
        <fullName evidence="1">NDH-1 subunit N</fullName>
    </alternativeName>
</protein>
<organism>
    <name type="scientific">Parafrankia sp. (strain EAN1pec)</name>
    <dbReference type="NCBI Taxonomy" id="298653"/>
    <lineage>
        <taxon>Bacteria</taxon>
        <taxon>Bacillati</taxon>
        <taxon>Actinomycetota</taxon>
        <taxon>Actinomycetes</taxon>
        <taxon>Frankiales</taxon>
        <taxon>Frankiaceae</taxon>
        <taxon>Parafrankia</taxon>
    </lineage>
</organism>
<accession>A8LC88</accession>
<feature type="chain" id="PRO_0000391148" description="NADH-quinone oxidoreductase subunit N">
    <location>
        <begin position="1"/>
        <end position="525"/>
    </location>
</feature>
<feature type="transmembrane region" description="Helical" evidence="1">
    <location>
        <begin position="26"/>
        <end position="46"/>
    </location>
</feature>
<feature type="transmembrane region" description="Helical" evidence="1">
    <location>
        <begin position="53"/>
        <end position="73"/>
    </location>
</feature>
<feature type="transmembrane region" description="Helical" evidence="1">
    <location>
        <begin position="90"/>
        <end position="110"/>
    </location>
</feature>
<feature type="transmembrane region" description="Helical" evidence="1">
    <location>
        <begin position="143"/>
        <end position="163"/>
    </location>
</feature>
<feature type="transmembrane region" description="Helical" evidence="1">
    <location>
        <begin position="167"/>
        <end position="187"/>
    </location>
</feature>
<feature type="transmembrane region" description="Helical" evidence="1">
    <location>
        <begin position="202"/>
        <end position="222"/>
    </location>
</feature>
<feature type="transmembrane region" description="Helical" evidence="1">
    <location>
        <begin position="246"/>
        <end position="266"/>
    </location>
</feature>
<feature type="transmembrane region" description="Helical" evidence="1">
    <location>
        <begin position="278"/>
        <end position="298"/>
    </location>
</feature>
<feature type="transmembrane region" description="Helical" evidence="1">
    <location>
        <begin position="314"/>
        <end position="334"/>
    </location>
</feature>
<feature type="transmembrane region" description="Helical" evidence="1">
    <location>
        <begin position="341"/>
        <end position="361"/>
    </location>
</feature>
<feature type="transmembrane region" description="Helical" evidence="1">
    <location>
        <begin position="368"/>
        <end position="388"/>
    </location>
</feature>
<feature type="transmembrane region" description="Helical" evidence="1">
    <location>
        <begin position="411"/>
        <end position="431"/>
    </location>
</feature>
<feature type="transmembrane region" description="Helical" evidence="1">
    <location>
        <begin position="449"/>
        <end position="469"/>
    </location>
</feature>
<feature type="transmembrane region" description="Helical" evidence="1">
    <location>
        <begin position="487"/>
        <end position="507"/>
    </location>
</feature>
<name>NUON_PARS2</name>
<keyword id="KW-1003">Cell membrane</keyword>
<keyword id="KW-0472">Membrane</keyword>
<keyword id="KW-0520">NAD</keyword>
<keyword id="KW-0874">Quinone</keyword>
<keyword id="KW-1278">Translocase</keyword>
<keyword id="KW-0812">Transmembrane</keyword>
<keyword id="KW-1133">Transmembrane helix</keyword>
<keyword id="KW-0813">Transport</keyword>
<proteinExistence type="inferred from homology"/>
<sequence length="525" mass="54762">MSAATTVLAQGAAQKITPPSIEYSSLSPMLILFGVALAGVLVDAFAPPKARRVLQPLLAGAGFIGAFVAVVLLHAHRQVLAAGAVAIDGPTLFLQGTILVFALLSVLLVAERRLDSSGGALVASAAVVPGSRGSTAQRTSPDVQTEAYPLMVFSVSGMLLFVASNNLLVMFVALEILSLPLYLLCGLARRRRLLSQEAAMKYFLLGAFSSAFFLYGVAFAYGYAGSVELGRVADAVGTVGQNDTYLYLSLALLGVGLFFKIGAAPFHSWTPDVYQGAPTPITAFMAAGTKVAAFGALLRVFYVAFGGMRWDWRPVIWAVAILTMVVGAVLALTQRDIKRMLAYSAVAHAGFLLVGMAGSNIDGLRGAMFYLVTYGFTTIAAFAVVSLVRTGDGEASDLSQWQGLGRTSPLLAGTFAFLLLALAGIPLTSGFTGKFAVFQAAIAGDATPLVVVALVCSAIAAFFYVRVIVLMFFSEPLADGPVVVTRPTLTFATVGIGALMTLLLGVAPQPLLDLATTAATSGFVR</sequence>
<comment type="function">
    <text evidence="1">NDH-1 shuttles electrons from NADH, via FMN and iron-sulfur (Fe-S) centers, to quinones in the respiratory chain. The immediate electron acceptor for the enzyme in this species is believed to be a menaquinone. Couples the redox reaction to proton translocation (for every two electrons transferred, four hydrogen ions are translocated across the cytoplasmic membrane), and thus conserves the redox energy in a proton gradient.</text>
</comment>
<comment type="catalytic activity">
    <reaction evidence="1">
        <text>a quinone + NADH + 5 H(+)(in) = a quinol + NAD(+) + 4 H(+)(out)</text>
        <dbReference type="Rhea" id="RHEA:57888"/>
        <dbReference type="ChEBI" id="CHEBI:15378"/>
        <dbReference type="ChEBI" id="CHEBI:24646"/>
        <dbReference type="ChEBI" id="CHEBI:57540"/>
        <dbReference type="ChEBI" id="CHEBI:57945"/>
        <dbReference type="ChEBI" id="CHEBI:132124"/>
    </reaction>
</comment>
<comment type="subunit">
    <text evidence="1">NDH-1 is composed of 14 different subunits. Subunits NuoA, H, J, K, L, M, N constitute the membrane sector of the complex.</text>
</comment>
<comment type="subcellular location">
    <subcellularLocation>
        <location evidence="1">Cell membrane</location>
        <topology evidence="1">Multi-pass membrane protein</topology>
    </subcellularLocation>
</comment>
<comment type="similarity">
    <text evidence="1">Belongs to the complex I subunit 2 family.</text>
</comment>
<gene>
    <name evidence="1" type="primary">nuoN</name>
    <name type="ordered locus">Franean1_6081</name>
</gene>